<reference key="1">
    <citation type="journal article" date="1995" name="Gene">
        <title>Cloning and analysis of the plasmid-borne genes encoding the Bsp6I restriction and modification enzymes.</title>
        <authorList>
            <person name="Lubys A."/>
            <person name="Janulaitis A."/>
        </authorList>
    </citation>
    <scope>NUCLEOTIDE SEQUENCE [GENOMIC DNA]</scope>
    <scope>FUNCTION</scope>
    <source>
        <strain>RFL6</strain>
    </source>
</reference>
<reference key="2">
    <citation type="journal article" date="2003" name="Nucleic Acids Res.">
        <title>A nomenclature for restriction enzymes, DNA methyltransferases, homing endonucleases and their genes.</title>
        <authorList>
            <person name="Roberts R.J."/>
            <person name="Belfort M."/>
            <person name="Bestor T."/>
            <person name="Bhagwat A.S."/>
            <person name="Bickle T.A."/>
            <person name="Bitinaite J."/>
            <person name="Blumenthal R.M."/>
            <person name="Degtyarev S.K."/>
            <person name="Dryden D.T."/>
            <person name="Dybvig K."/>
            <person name="Firman K."/>
            <person name="Gromova E.S."/>
            <person name="Gumport R.I."/>
            <person name="Halford S.E."/>
            <person name="Hattman S."/>
            <person name="Heitman J."/>
            <person name="Hornby D.P."/>
            <person name="Janulaitis A."/>
            <person name="Jeltsch A."/>
            <person name="Josephsen J."/>
            <person name="Kiss A."/>
            <person name="Klaenhammer T.R."/>
            <person name="Kobayashi I."/>
            <person name="Kong H."/>
            <person name="Krueger D.H."/>
            <person name="Lacks S."/>
            <person name="Marinus M.G."/>
            <person name="Miyahara M."/>
            <person name="Morgan R.D."/>
            <person name="Murray N.E."/>
            <person name="Nagaraja V."/>
            <person name="Piekarowicz A."/>
            <person name="Pingoud A."/>
            <person name="Raleigh E."/>
            <person name="Rao D.N."/>
            <person name="Reich N."/>
            <person name="Repin V.E."/>
            <person name="Selker E.U."/>
            <person name="Shaw P.C."/>
            <person name="Stein D.C."/>
            <person name="Stoddard B.L."/>
            <person name="Szybalski W."/>
            <person name="Trautner T.A."/>
            <person name="Van Etten J.L."/>
            <person name="Vitor J.M."/>
            <person name="Wilson G.G."/>
            <person name="Xu S.Y."/>
        </authorList>
    </citation>
    <scope>NOMENCLATURE</scope>
    <scope>SUBTYPE</scope>
</reference>
<dbReference type="EC" id="3.1.21.4"/>
<dbReference type="EMBL" id="X81638">
    <property type="protein sequence ID" value="CAA57292.1"/>
    <property type="molecule type" value="Genomic_DNA"/>
</dbReference>
<dbReference type="PIR" id="I40137">
    <property type="entry name" value="I40137"/>
</dbReference>
<dbReference type="SMR" id="P43419"/>
<dbReference type="REBASE" id="485">
    <property type="entry name" value="Bsp6I"/>
</dbReference>
<dbReference type="PRO" id="PR:P43419"/>
<dbReference type="GO" id="GO:0009036">
    <property type="term" value="F:type II site-specific deoxyribonuclease activity"/>
    <property type="evidence" value="ECO:0007669"/>
    <property type="project" value="UniProtKB-EC"/>
</dbReference>
<dbReference type="GO" id="GO:0009307">
    <property type="term" value="P:DNA restriction-modification system"/>
    <property type="evidence" value="ECO:0007669"/>
    <property type="project" value="UniProtKB-KW"/>
</dbReference>
<dbReference type="InterPro" id="IPR019037">
    <property type="entry name" value="Restrct_endonuc_II_Bsp6I"/>
</dbReference>
<dbReference type="Pfam" id="PF09504">
    <property type="entry name" value="RE_Bsp6I"/>
    <property type="match status" value="1"/>
</dbReference>
<name>T2B6_BACSF</name>
<evidence type="ECO:0000303" key="1">
    <source>
    </source>
</evidence>
<evidence type="ECO:0000303" key="2">
    <source>
    </source>
</evidence>
<evidence type="ECO:0000305" key="3">
    <source>
    </source>
</evidence>
<proteinExistence type="predicted"/>
<keyword id="KW-0255">Endonuclease</keyword>
<keyword id="KW-0378">Hydrolase</keyword>
<keyword id="KW-0540">Nuclease</keyword>
<keyword id="KW-0614">Plasmid</keyword>
<keyword id="KW-0680">Restriction system</keyword>
<accession>P43419</accession>
<organism>
    <name type="scientific">Bacillus sp. (strain RFL6)</name>
    <dbReference type="NCBI Taxonomy" id="72577"/>
    <lineage>
        <taxon>Bacteria</taxon>
        <taxon>Bacillati</taxon>
        <taxon>Bacillota</taxon>
        <taxon>Bacilli</taxon>
        <taxon>Bacillales</taxon>
        <taxon>Bacillaceae</taxon>
        <taxon>Bacillus</taxon>
    </lineage>
</organism>
<gene>
    <name evidence="2" type="primary">bsp6IR</name>
</gene>
<protein>
    <recommendedName>
        <fullName evidence="1">Type II restriction enzyme Bsp6I</fullName>
        <shortName evidence="2">R.Bsp6I</shortName>
        <ecNumber>3.1.21.4</ecNumber>
    </recommendedName>
    <alternativeName>
        <fullName>Endonuclease Bsp6I</fullName>
    </alternativeName>
    <alternativeName>
        <fullName>Type-2 restriction enzyme Bsp6I</fullName>
    </alternativeName>
</protein>
<geneLocation type="plasmid">
    <name>pXH13</name>
</geneLocation>
<comment type="function">
    <text evidence="1 3">A P subtype restriction enzyme that recognizes the double-stranded sequence 5'-GCNGC-3' and cleaves after C-2.</text>
</comment>
<comment type="catalytic activity">
    <reaction>
        <text>Endonucleolytic cleavage of DNA to give specific double-stranded fragments with terminal 5'-phosphates.</text>
        <dbReference type="EC" id="3.1.21.4"/>
    </reaction>
</comment>
<sequence length="174" mass="19905">MALHDFVKIDKSRFEDAVKAYFLWKELNALIKNSHNRGINFPETISETLLCAAMGFELNRGTGGDAREPKTQAIIESKATSNWDRDTTSFSPSENFDALYFLRLNQRDDELYIYNTGINSDDLKSIQVNKTQTLGDQQAQGRRPRFSVIKFIIEANDIEPVAKVELRTKKIIKL</sequence>
<feature type="chain" id="PRO_0000077287" description="Type II restriction enzyme Bsp6I">
    <location>
        <begin position="1"/>
        <end position="174"/>
    </location>
</feature>